<protein>
    <recommendedName>
        <fullName evidence="1">Large ribosomal subunit protein bL17</fullName>
    </recommendedName>
    <alternativeName>
        <fullName evidence="2">50S ribosomal protein L17</fullName>
    </alternativeName>
</protein>
<name>RL17_DICNV</name>
<accession>A5EXB2</accession>
<comment type="subunit">
    <text evidence="1">Part of the 50S ribosomal subunit. Contacts protein L32.</text>
</comment>
<comment type="similarity">
    <text evidence="1">Belongs to the bacterial ribosomal protein bL17 family.</text>
</comment>
<reference key="1">
    <citation type="journal article" date="2007" name="Nat. Biotechnol.">
        <title>Genome sequence and identification of candidate vaccine antigens from the animal pathogen Dichelobacter nodosus.</title>
        <authorList>
            <person name="Myers G.S.A."/>
            <person name="Parker D."/>
            <person name="Al-Hasani K."/>
            <person name="Kennan R.M."/>
            <person name="Seemann T."/>
            <person name="Ren Q."/>
            <person name="Badger J.H."/>
            <person name="Selengut J.D."/>
            <person name="Deboy R.T."/>
            <person name="Tettelin H."/>
            <person name="Boyce J.D."/>
            <person name="McCarl V.P."/>
            <person name="Han X."/>
            <person name="Nelson W.C."/>
            <person name="Madupu R."/>
            <person name="Mohamoud Y."/>
            <person name="Holley T."/>
            <person name="Fedorova N."/>
            <person name="Khouri H."/>
            <person name="Bottomley S.P."/>
            <person name="Whittington R.J."/>
            <person name="Adler B."/>
            <person name="Songer J.G."/>
            <person name="Rood J.I."/>
            <person name="Paulsen I.T."/>
        </authorList>
    </citation>
    <scope>NUCLEOTIDE SEQUENCE [LARGE SCALE GENOMIC DNA]</scope>
    <source>
        <strain>VCS1703A</strain>
    </source>
</reference>
<keyword id="KW-1185">Reference proteome</keyword>
<keyword id="KW-0687">Ribonucleoprotein</keyword>
<keyword id="KW-0689">Ribosomal protein</keyword>
<evidence type="ECO:0000255" key="1">
    <source>
        <dbReference type="HAMAP-Rule" id="MF_01368"/>
    </source>
</evidence>
<evidence type="ECO:0000305" key="2"/>
<organism>
    <name type="scientific">Dichelobacter nodosus (strain VCS1703A)</name>
    <dbReference type="NCBI Taxonomy" id="246195"/>
    <lineage>
        <taxon>Bacteria</taxon>
        <taxon>Pseudomonadati</taxon>
        <taxon>Pseudomonadota</taxon>
        <taxon>Gammaproteobacteria</taxon>
        <taxon>Cardiobacteriales</taxon>
        <taxon>Cardiobacteriaceae</taxon>
        <taxon>Dichelobacter</taxon>
    </lineage>
</organism>
<gene>
    <name evidence="1" type="primary">rplQ</name>
    <name type="ordered locus">DNO_1250</name>
</gene>
<dbReference type="EMBL" id="CP000513">
    <property type="protein sequence ID" value="ABQ14193.1"/>
    <property type="molecule type" value="Genomic_DNA"/>
</dbReference>
<dbReference type="RefSeq" id="WP_012031545.1">
    <property type="nucleotide sequence ID" value="NC_009446.1"/>
</dbReference>
<dbReference type="SMR" id="A5EXB2"/>
<dbReference type="STRING" id="246195.DNO_1250"/>
<dbReference type="KEGG" id="dno:DNO_1250"/>
<dbReference type="eggNOG" id="COG0203">
    <property type="taxonomic scope" value="Bacteria"/>
</dbReference>
<dbReference type="HOGENOM" id="CLU_074407_2_0_6"/>
<dbReference type="OrthoDB" id="9809073at2"/>
<dbReference type="Proteomes" id="UP000000248">
    <property type="component" value="Chromosome"/>
</dbReference>
<dbReference type="GO" id="GO:0022625">
    <property type="term" value="C:cytosolic large ribosomal subunit"/>
    <property type="evidence" value="ECO:0007669"/>
    <property type="project" value="TreeGrafter"/>
</dbReference>
<dbReference type="GO" id="GO:0003735">
    <property type="term" value="F:structural constituent of ribosome"/>
    <property type="evidence" value="ECO:0007669"/>
    <property type="project" value="InterPro"/>
</dbReference>
<dbReference type="GO" id="GO:0006412">
    <property type="term" value="P:translation"/>
    <property type="evidence" value="ECO:0007669"/>
    <property type="project" value="UniProtKB-UniRule"/>
</dbReference>
<dbReference type="FunFam" id="3.90.1030.10:FF:000001">
    <property type="entry name" value="50S ribosomal protein L17"/>
    <property type="match status" value="1"/>
</dbReference>
<dbReference type="Gene3D" id="3.90.1030.10">
    <property type="entry name" value="Ribosomal protein L17"/>
    <property type="match status" value="1"/>
</dbReference>
<dbReference type="HAMAP" id="MF_01368">
    <property type="entry name" value="Ribosomal_bL17"/>
    <property type="match status" value="1"/>
</dbReference>
<dbReference type="InterPro" id="IPR000456">
    <property type="entry name" value="Ribosomal_bL17"/>
</dbReference>
<dbReference type="InterPro" id="IPR047859">
    <property type="entry name" value="Ribosomal_bL17_CS"/>
</dbReference>
<dbReference type="InterPro" id="IPR036373">
    <property type="entry name" value="Ribosomal_bL17_sf"/>
</dbReference>
<dbReference type="NCBIfam" id="TIGR00059">
    <property type="entry name" value="L17"/>
    <property type="match status" value="1"/>
</dbReference>
<dbReference type="PANTHER" id="PTHR14413:SF16">
    <property type="entry name" value="LARGE RIBOSOMAL SUBUNIT PROTEIN BL17M"/>
    <property type="match status" value="1"/>
</dbReference>
<dbReference type="PANTHER" id="PTHR14413">
    <property type="entry name" value="RIBOSOMAL PROTEIN L17"/>
    <property type="match status" value="1"/>
</dbReference>
<dbReference type="Pfam" id="PF01196">
    <property type="entry name" value="Ribosomal_L17"/>
    <property type="match status" value="1"/>
</dbReference>
<dbReference type="SUPFAM" id="SSF64263">
    <property type="entry name" value="Prokaryotic ribosomal protein L17"/>
    <property type="match status" value="1"/>
</dbReference>
<dbReference type="PROSITE" id="PS01167">
    <property type="entry name" value="RIBOSOMAL_L17"/>
    <property type="match status" value="1"/>
</dbReference>
<proteinExistence type="inferred from homology"/>
<sequence>MRHKLAGRKFNRTSAHRQAMFKNMAVSLIEHELIKTTLPKAKDLRRVIEPMITHAKNNDTVAARRLAFARLRDRAAVQKLFAELAPRYQERAGGYVRILKCDFRAGDQAPMAYVELVDRPVAE</sequence>
<feature type="chain" id="PRO_1000055816" description="Large ribosomal subunit protein bL17">
    <location>
        <begin position="1"/>
        <end position="123"/>
    </location>
</feature>